<gene>
    <name evidence="2" type="primary">pfkA2</name>
    <name type="synonym">pfk</name>
    <name type="ordered locus">CPE1185</name>
</gene>
<organism>
    <name type="scientific">Clostridium perfringens (strain 13 / Type A)</name>
    <dbReference type="NCBI Taxonomy" id="195102"/>
    <lineage>
        <taxon>Bacteria</taxon>
        <taxon>Bacillati</taxon>
        <taxon>Bacillota</taxon>
        <taxon>Clostridia</taxon>
        <taxon>Eubacteriales</taxon>
        <taxon>Clostridiaceae</taxon>
        <taxon>Clostridium</taxon>
    </lineage>
</organism>
<protein>
    <recommendedName>
        <fullName evidence="2">ATP-dependent 6-phosphofructokinase 2</fullName>
        <shortName evidence="2">ATP-PFK 2</shortName>
        <shortName evidence="2">Phosphofructokinase 2</shortName>
        <ecNumber evidence="2">2.7.1.11</ecNumber>
    </recommendedName>
    <alternativeName>
        <fullName evidence="2">Phosphohexokinase 2</fullName>
    </alternativeName>
</protein>
<sequence>MMQPIKKIAILTGGGDCPGLNAVIRAVTRTAILKYGYEVIGYKFGYRGLYNNDFVKLDLDSVSGILHRGGTILHSSNKDNLFDYQVEDENGKIVKKDVSDVGVENLKKEGVDALVVIGGDGTLTSARDFSRKGVNVIGVPKTIDNDLLATDVTFGFNTATEIATEALDRLHTTAESHHRIMLLEVMGRNAGWIALESGIAGSADVILLPEIPYDINKIVEKVKEREEAGKQFTIIVVAEGAKPKDGEVVVSKIVDDSPDPIRLGGIANKLAIDLEGLIKNHEIRSTVLGHIQRGGNTSTYDRILSTKYGVKAVELINSNLFGNMVALKGNKVSYESLENVIGHTKNVDPEGELVNTAKSIGISFAD</sequence>
<proteinExistence type="inferred from homology"/>
<name>PFKA2_CLOPE</name>
<keyword id="KW-0067">ATP-binding</keyword>
<keyword id="KW-0963">Cytoplasm</keyword>
<keyword id="KW-0324">Glycolysis</keyword>
<keyword id="KW-0418">Kinase</keyword>
<keyword id="KW-0460">Magnesium</keyword>
<keyword id="KW-0479">Metal-binding</keyword>
<keyword id="KW-0547">Nucleotide-binding</keyword>
<keyword id="KW-1185">Reference proteome</keyword>
<keyword id="KW-0808">Transferase</keyword>
<feature type="chain" id="PRO_0000111945" description="ATP-dependent 6-phosphofructokinase 2">
    <location>
        <begin position="1"/>
        <end position="366"/>
    </location>
</feature>
<feature type="active site" description="Proton acceptor" evidence="2">
    <location>
        <position position="144"/>
    </location>
</feature>
<feature type="binding site" evidence="2">
    <location>
        <position position="15"/>
    </location>
    <ligand>
        <name>ATP</name>
        <dbReference type="ChEBI" id="CHEBI:30616"/>
    </ligand>
</feature>
<feature type="binding site" evidence="2">
    <location>
        <begin position="78"/>
        <end position="79"/>
    </location>
    <ligand>
        <name>ATP</name>
        <dbReference type="ChEBI" id="CHEBI:30616"/>
    </ligand>
</feature>
<feature type="binding site" evidence="2">
    <location>
        <begin position="119"/>
        <end position="122"/>
    </location>
    <ligand>
        <name>ATP</name>
        <dbReference type="ChEBI" id="CHEBI:30616"/>
    </ligand>
</feature>
<feature type="binding site" evidence="2">
    <location>
        <position position="120"/>
    </location>
    <ligand>
        <name>Mg(2+)</name>
        <dbReference type="ChEBI" id="CHEBI:18420"/>
        <note>catalytic</note>
    </ligand>
</feature>
<feature type="binding site" description="in other chain" evidence="2">
    <location>
        <begin position="142"/>
        <end position="144"/>
    </location>
    <ligand>
        <name>substrate</name>
        <note>ligand shared between dimeric partners</note>
    </ligand>
</feature>
<feature type="binding site" evidence="2">
    <location>
        <position position="179"/>
    </location>
    <ligand>
        <name>substrate</name>
        <note>ligand shared between dimeric partners</note>
    </ligand>
</feature>
<feature type="binding site" description="in other chain" evidence="2">
    <location>
        <begin position="186"/>
        <end position="188"/>
    </location>
    <ligand>
        <name>substrate</name>
        <note>ligand shared between dimeric partners</note>
    </ligand>
</feature>
<feature type="binding site" description="in other chain" evidence="2">
    <location>
        <position position="239"/>
    </location>
    <ligand>
        <name>substrate</name>
        <note>ligand shared between dimeric partners</note>
    </ligand>
</feature>
<feature type="binding site" evidence="2">
    <location>
        <position position="284"/>
    </location>
    <ligand>
        <name>substrate</name>
        <note>ligand shared between dimeric partners</note>
    </ligand>
</feature>
<feature type="binding site" description="in other chain" evidence="2">
    <location>
        <begin position="290"/>
        <end position="293"/>
    </location>
    <ligand>
        <name>substrate</name>
        <note>ligand shared between dimeric partners</note>
    </ligand>
</feature>
<feature type="site" description="Important for substrate specificity; cannot use PPi as phosphoryl donor" evidence="2">
    <location>
        <position position="121"/>
    </location>
</feature>
<comment type="function">
    <text evidence="2">Catalyzes the phosphorylation of D-fructose 6-phosphate to fructose 1,6-bisphosphate by ATP, the first committing step of glycolysis.</text>
</comment>
<comment type="catalytic activity">
    <reaction evidence="2">
        <text>beta-D-fructose 6-phosphate + ATP = beta-D-fructose 1,6-bisphosphate + ADP + H(+)</text>
        <dbReference type="Rhea" id="RHEA:16109"/>
        <dbReference type="ChEBI" id="CHEBI:15378"/>
        <dbReference type="ChEBI" id="CHEBI:30616"/>
        <dbReference type="ChEBI" id="CHEBI:32966"/>
        <dbReference type="ChEBI" id="CHEBI:57634"/>
        <dbReference type="ChEBI" id="CHEBI:456216"/>
        <dbReference type="EC" id="2.7.1.11"/>
    </reaction>
</comment>
<comment type="cofactor">
    <cofactor evidence="2">
        <name>Mg(2+)</name>
        <dbReference type="ChEBI" id="CHEBI:18420"/>
    </cofactor>
</comment>
<comment type="activity regulation">
    <text evidence="1">Subject to allosteric activation by ADP and other diphosphonucleosides, and inhibition by phosphoenolpyruvate.</text>
</comment>
<comment type="pathway">
    <text evidence="2">Carbohydrate degradation; glycolysis; D-glyceraldehyde 3-phosphate and glycerone phosphate from D-glucose: step 3/4.</text>
</comment>
<comment type="subunit">
    <text evidence="2">Homodimer or homotetramer.</text>
</comment>
<comment type="subcellular location">
    <subcellularLocation>
        <location evidence="2">Cytoplasm</location>
    </subcellularLocation>
</comment>
<comment type="similarity">
    <text evidence="2">Belongs to the phosphofructokinase type A (PFKA) family. Mixed-substrate PFK group III subfamily.</text>
</comment>
<reference key="1">
    <citation type="journal article" date="2002" name="Proc. Natl. Acad. Sci. U.S.A.">
        <title>Complete genome sequence of Clostridium perfringens, an anaerobic flesh-eater.</title>
        <authorList>
            <person name="Shimizu T."/>
            <person name="Ohtani K."/>
            <person name="Hirakawa H."/>
            <person name="Ohshima K."/>
            <person name="Yamashita A."/>
            <person name="Shiba T."/>
            <person name="Ogasawara N."/>
            <person name="Hattori M."/>
            <person name="Kuhara S."/>
            <person name="Hayashi H."/>
        </authorList>
    </citation>
    <scope>NUCLEOTIDE SEQUENCE [LARGE SCALE GENOMIC DNA]</scope>
    <source>
        <strain>13 / Type A</strain>
    </source>
</reference>
<dbReference type="EC" id="2.7.1.11" evidence="2"/>
<dbReference type="EMBL" id="BA000016">
    <property type="protein sequence ID" value="BAB80891.1"/>
    <property type="molecule type" value="Genomic_DNA"/>
</dbReference>
<dbReference type="RefSeq" id="WP_003467367.1">
    <property type="nucleotide sequence ID" value="NC_003366.1"/>
</dbReference>
<dbReference type="SMR" id="Q8XL57"/>
<dbReference type="STRING" id="195102.gene:10490448"/>
<dbReference type="KEGG" id="cpe:CPE1185"/>
<dbReference type="HOGENOM" id="CLU_020655_0_0_9"/>
<dbReference type="UniPathway" id="UPA00109">
    <property type="reaction ID" value="UER00182"/>
</dbReference>
<dbReference type="Proteomes" id="UP000000818">
    <property type="component" value="Chromosome"/>
</dbReference>
<dbReference type="GO" id="GO:0005945">
    <property type="term" value="C:6-phosphofructokinase complex"/>
    <property type="evidence" value="ECO:0007669"/>
    <property type="project" value="TreeGrafter"/>
</dbReference>
<dbReference type="GO" id="GO:0003872">
    <property type="term" value="F:6-phosphofructokinase activity"/>
    <property type="evidence" value="ECO:0007669"/>
    <property type="project" value="UniProtKB-UniRule"/>
</dbReference>
<dbReference type="GO" id="GO:0016208">
    <property type="term" value="F:AMP binding"/>
    <property type="evidence" value="ECO:0007669"/>
    <property type="project" value="TreeGrafter"/>
</dbReference>
<dbReference type="GO" id="GO:0005524">
    <property type="term" value="F:ATP binding"/>
    <property type="evidence" value="ECO:0007669"/>
    <property type="project" value="UniProtKB-KW"/>
</dbReference>
<dbReference type="GO" id="GO:0047334">
    <property type="term" value="F:diphosphate-fructose-6-phosphate 1-phosphotransferase activity"/>
    <property type="evidence" value="ECO:0007669"/>
    <property type="project" value="InterPro"/>
</dbReference>
<dbReference type="GO" id="GO:0070095">
    <property type="term" value="F:fructose-6-phosphate binding"/>
    <property type="evidence" value="ECO:0007669"/>
    <property type="project" value="TreeGrafter"/>
</dbReference>
<dbReference type="GO" id="GO:0042802">
    <property type="term" value="F:identical protein binding"/>
    <property type="evidence" value="ECO:0007669"/>
    <property type="project" value="TreeGrafter"/>
</dbReference>
<dbReference type="GO" id="GO:0046872">
    <property type="term" value="F:metal ion binding"/>
    <property type="evidence" value="ECO:0007669"/>
    <property type="project" value="UniProtKB-KW"/>
</dbReference>
<dbReference type="GO" id="GO:0048029">
    <property type="term" value="F:monosaccharide binding"/>
    <property type="evidence" value="ECO:0007669"/>
    <property type="project" value="TreeGrafter"/>
</dbReference>
<dbReference type="GO" id="GO:0061621">
    <property type="term" value="P:canonical glycolysis"/>
    <property type="evidence" value="ECO:0007669"/>
    <property type="project" value="TreeGrafter"/>
</dbReference>
<dbReference type="GO" id="GO:0030388">
    <property type="term" value="P:fructose 1,6-bisphosphate metabolic process"/>
    <property type="evidence" value="ECO:0007669"/>
    <property type="project" value="TreeGrafter"/>
</dbReference>
<dbReference type="GO" id="GO:0006002">
    <property type="term" value="P:fructose 6-phosphate metabolic process"/>
    <property type="evidence" value="ECO:0007669"/>
    <property type="project" value="InterPro"/>
</dbReference>
<dbReference type="FunFam" id="3.40.50.460:FF:000002">
    <property type="entry name" value="ATP-dependent 6-phosphofructokinase"/>
    <property type="match status" value="1"/>
</dbReference>
<dbReference type="Gene3D" id="3.40.50.450">
    <property type="match status" value="1"/>
</dbReference>
<dbReference type="Gene3D" id="3.40.50.460">
    <property type="entry name" value="Phosphofructokinase domain"/>
    <property type="match status" value="1"/>
</dbReference>
<dbReference type="HAMAP" id="MF_01976">
    <property type="entry name" value="Phosphofructokinase_III"/>
    <property type="match status" value="1"/>
</dbReference>
<dbReference type="InterPro" id="IPR022953">
    <property type="entry name" value="ATP_PFK"/>
</dbReference>
<dbReference type="InterPro" id="IPR012003">
    <property type="entry name" value="ATP_PFK_prok-type"/>
</dbReference>
<dbReference type="InterPro" id="IPR015912">
    <property type="entry name" value="Phosphofructokinase_CS"/>
</dbReference>
<dbReference type="InterPro" id="IPR000023">
    <property type="entry name" value="Phosphofructokinase_dom"/>
</dbReference>
<dbReference type="InterPro" id="IPR012829">
    <property type="entry name" value="Phosphofructokinase_III"/>
</dbReference>
<dbReference type="InterPro" id="IPR035966">
    <property type="entry name" value="PKF_sf"/>
</dbReference>
<dbReference type="NCBIfam" id="TIGR02483">
    <property type="entry name" value="PFK_mixed"/>
    <property type="match status" value="1"/>
</dbReference>
<dbReference type="NCBIfam" id="NF002872">
    <property type="entry name" value="PRK03202.1"/>
    <property type="match status" value="1"/>
</dbReference>
<dbReference type="PANTHER" id="PTHR13697:SF52">
    <property type="entry name" value="ATP-DEPENDENT 6-PHOSPHOFRUCTOKINASE 3"/>
    <property type="match status" value="1"/>
</dbReference>
<dbReference type="PANTHER" id="PTHR13697">
    <property type="entry name" value="PHOSPHOFRUCTOKINASE"/>
    <property type="match status" value="1"/>
</dbReference>
<dbReference type="Pfam" id="PF00365">
    <property type="entry name" value="PFK"/>
    <property type="match status" value="1"/>
</dbReference>
<dbReference type="PIRSF" id="PIRSF000532">
    <property type="entry name" value="ATP_PFK_prok"/>
    <property type="match status" value="1"/>
</dbReference>
<dbReference type="PRINTS" id="PR00476">
    <property type="entry name" value="PHFRCTKINASE"/>
</dbReference>
<dbReference type="SUPFAM" id="SSF53784">
    <property type="entry name" value="Phosphofructokinase"/>
    <property type="match status" value="1"/>
</dbReference>
<dbReference type="PROSITE" id="PS00433">
    <property type="entry name" value="PHOSPHOFRUCTOKINASE"/>
    <property type="match status" value="1"/>
</dbReference>
<evidence type="ECO:0000250" key="1"/>
<evidence type="ECO:0000255" key="2">
    <source>
        <dbReference type="HAMAP-Rule" id="MF_01976"/>
    </source>
</evidence>
<accession>Q8XL57</accession>